<evidence type="ECO:0000250" key="1"/>
<evidence type="ECO:0000305" key="2"/>
<gene>
    <name type="primary">REX3</name>
    <name type="ordered locus">CAGL0M11638g</name>
</gene>
<dbReference type="EC" id="3.1.-.-"/>
<dbReference type="EMBL" id="CR380959">
    <property type="protein sequence ID" value="CAG62827.1"/>
    <property type="molecule type" value="Genomic_DNA"/>
</dbReference>
<dbReference type="RefSeq" id="XP_449847.1">
    <property type="nucleotide sequence ID" value="XM_449847.1"/>
</dbReference>
<dbReference type="SMR" id="Q6FIU7"/>
<dbReference type="FunCoup" id="Q6FIU7">
    <property type="interactions" value="101"/>
</dbReference>
<dbReference type="STRING" id="284593.Q6FIU7"/>
<dbReference type="EnsemblFungi" id="CAGL0M11638g-T">
    <property type="protein sequence ID" value="CAGL0M11638g-T-p1"/>
    <property type="gene ID" value="CAGL0M11638g"/>
</dbReference>
<dbReference type="KEGG" id="cgr:2891241"/>
<dbReference type="CGD" id="CAL0137317">
    <property type="gene designation" value="CAGL0M11638g"/>
</dbReference>
<dbReference type="VEuPathDB" id="FungiDB:CAGL0M11638g"/>
<dbReference type="eggNOG" id="KOG2248">
    <property type="taxonomic scope" value="Eukaryota"/>
</dbReference>
<dbReference type="HOGENOM" id="CLU_022453_5_4_1"/>
<dbReference type="InParanoid" id="Q6FIU7"/>
<dbReference type="OMA" id="IDCEMGF"/>
<dbReference type="Proteomes" id="UP000002428">
    <property type="component" value="Chromosome M"/>
</dbReference>
<dbReference type="GO" id="GO:0005737">
    <property type="term" value="C:cytoplasm"/>
    <property type="evidence" value="ECO:0007669"/>
    <property type="project" value="UniProtKB-SubCell"/>
</dbReference>
<dbReference type="GO" id="GO:0005634">
    <property type="term" value="C:nucleus"/>
    <property type="evidence" value="ECO:0007669"/>
    <property type="project" value="UniProtKB-SubCell"/>
</dbReference>
<dbReference type="GO" id="GO:0000175">
    <property type="term" value="F:3'-5'-RNA exonuclease activity"/>
    <property type="evidence" value="ECO:0007669"/>
    <property type="project" value="EnsemblFungi"/>
</dbReference>
<dbReference type="GO" id="GO:0003676">
    <property type="term" value="F:nucleic acid binding"/>
    <property type="evidence" value="ECO:0007669"/>
    <property type="project" value="InterPro"/>
</dbReference>
<dbReference type="GO" id="GO:0000467">
    <property type="term" value="P:exonucleolytic trimming to generate mature 3'-end of 5.8S rRNA from tricistronic rRNA transcript (SSU-rRNA, 5.8S rRNA, LSU-rRNA)"/>
    <property type="evidence" value="ECO:0007669"/>
    <property type="project" value="EnsemblFungi"/>
</dbReference>
<dbReference type="GO" id="GO:0043628">
    <property type="term" value="P:regulatory ncRNA 3'-end processing"/>
    <property type="evidence" value="ECO:0007669"/>
    <property type="project" value="EnsemblFungi"/>
</dbReference>
<dbReference type="GO" id="GO:0034476">
    <property type="term" value="P:U5 snRNA 3'-end processing"/>
    <property type="evidence" value="ECO:0007669"/>
    <property type="project" value="EnsemblFungi"/>
</dbReference>
<dbReference type="CDD" id="cd06145">
    <property type="entry name" value="REX1_like"/>
    <property type="match status" value="1"/>
</dbReference>
<dbReference type="FunFam" id="3.30.420.10:FF:000031">
    <property type="entry name" value="RNA exonuclease 1"/>
    <property type="match status" value="1"/>
</dbReference>
<dbReference type="Gene3D" id="3.30.420.10">
    <property type="entry name" value="Ribonuclease H-like superfamily/Ribonuclease H"/>
    <property type="match status" value="1"/>
</dbReference>
<dbReference type="InterPro" id="IPR013520">
    <property type="entry name" value="Exonuclease_RNaseT/DNA_pol3"/>
</dbReference>
<dbReference type="InterPro" id="IPR034922">
    <property type="entry name" value="REX1-like_exo"/>
</dbReference>
<dbReference type="InterPro" id="IPR047021">
    <property type="entry name" value="REXO1/3/4-like"/>
</dbReference>
<dbReference type="InterPro" id="IPR012337">
    <property type="entry name" value="RNaseH-like_sf"/>
</dbReference>
<dbReference type="InterPro" id="IPR036397">
    <property type="entry name" value="RNaseH_sf"/>
</dbReference>
<dbReference type="PANTHER" id="PTHR12801:SF118">
    <property type="entry name" value="RNA EXONUCLEASE 3"/>
    <property type="match status" value="1"/>
</dbReference>
<dbReference type="PANTHER" id="PTHR12801">
    <property type="entry name" value="RNA EXONUCLEASE REXO1 / RECO3 FAMILY MEMBER-RELATED"/>
    <property type="match status" value="1"/>
</dbReference>
<dbReference type="SMART" id="SM00479">
    <property type="entry name" value="EXOIII"/>
    <property type="match status" value="1"/>
</dbReference>
<dbReference type="SUPFAM" id="SSF53098">
    <property type="entry name" value="Ribonuclease H-like"/>
    <property type="match status" value="1"/>
</dbReference>
<sequence>MMGKETPSLRPVELPIQPVGFQDRYKVIHKICEALEKVAYPRVKLAKFAVSLELKLAKESKTSQLYRFNVGILLRDIVKFKANVYKLKIANKPLVPQKVNGRSHTAPITTKQEVFTRLRELLIDKETLRKNGYILPDVKYEPQQPVSSHVTCVRCGTKFSKEDIMNSVVCKFHPSKKLYDKSTKLEIYPCCGESTSSVSFLRLGCSTQKHHVYKGETYSELCTIANFLTTDLIDGKENVLALDCEMGFTTMGYEMVRLTIVDFFTSKTLYDEIIRPIGEVIDLNTQFSGVREEDILYAKDYEDVMEDVLRADMINRNSILIGHGLENDLNVMRLFHTRILDTAIMYSVGRFKNSLKNLSFEILSRKIQLGEHDSSQDAIAAMDIIKAKNGISITQTDW</sequence>
<feature type="chain" id="PRO_0000120932" description="RNA exonuclease 3">
    <location>
        <begin position="1"/>
        <end position="398"/>
    </location>
</feature>
<feature type="domain" description="Exonuclease">
    <location>
        <begin position="239"/>
        <end position="385"/>
    </location>
</feature>
<organism>
    <name type="scientific">Candida glabrata (strain ATCC 2001 / BCRC 20586 / JCM 3761 / NBRC 0622 / NRRL Y-65 / CBS 138)</name>
    <name type="common">Yeast</name>
    <name type="synonym">Nakaseomyces glabratus</name>
    <dbReference type="NCBI Taxonomy" id="284593"/>
    <lineage>
        <taxon>Eukaryota</taxon>
        <taxon>Fungi</taxon>
        <taxon>Dikarya</taxon>
        <taxon>Ascomycota</taxon>
        <taxon>Saccharomycotina</taxon>
        <taxon>Saccharomycetes</taxon>
        <taxon>Saccharomycetales</taxon>
        <taxon>Saccharomycetaceae</taxon>
        <taxon>Nakaseomyces</taxon>
    </lineage>
</organism>
<name>REXO3_CANGA</name>
<comment type="function">
    <text evidence="1">3' to 5' exoribonuclease required for proper 3' end maturation of MRP RNA and of the U5L snRNA.</text>
</comment>
<comment type="subcellular location">
    <subcellularLocation>
        <location evidence="1">Cytoplasm</location>
    </subcellularLocation>
    <subcellularLocation>
        <location evidence="1">Nucleus</location>
    </subcellularLocation>
</comment>
<comment type="similarity">
    <text evidence="2">Belongs to the REXO1/REXO3 family.</text>
</comment>
<proteinExistence type="inferred from homology"/>
<accession>Q6FIU7</accession>
<keyword id="KW-0963">Cytoplasm</keyword>
<keyword id="KW-0269">Exonuclease</keyword>
<keyword id="KW-0378">Hydrolase</keyword>
<keyword id="KW-0540">Nuclease</keyword>
<keyword id="KW-0539">Nucleus</keyword>
<keyword id="KW-1185">Reference proteome</keyword>
<keyword id="KW-0698">rRNA processing</keyword>
<protein>
    <recommendedName>
        <fullName>RNA exonuclease 3</fullName>
        <ecNumber>3.1.-.-</ecNumber>
    </recommendedName>
</protein>
<reference key="1">
    <citation type="journal article" date="2004" name="Nature">
        <title>Genome evolution in yeasts.</title>
        <authorList>
            <person name="Dujon B."/>
            <person name="Sherman D."/>
            <person name="Fischer G."/>
            <person name="Durrens P."/>
            <person name="Casaregola S."/>
            <person name="Lafontaine I."/>
            <person name="de Montigny J."/>
            <person name="Marck C."/>
            <person name="Neuveglise C."/>
            <person name="Talla E."/>
            <person name="Goffard N."/>
            <person name="Frangeul L."/>
            <person name="Aigle M."/>
            <person name="Anthouard V."/>
            <person name="Babour A."/>
            <person name="Barbe V."/>
            <person name="Barnay S."/>
            <person name="Blanchin S."/>
            <person name="Beckerich J.-M."/>
            <person name="Beyne E."/>
            <person name="Bleykasten C."/>
            <person name="Boisrame A."/>
            <person name="Boyer J."/>
            <person name="Cattolico L."/>
            <person name="Confanioleri F."/>
            <person name="de Daruvar A."/>
            <person name="Despons L."/>
            <person name="Fabre E."/>
            <person name="Fairhead C."/>
            <person name="Ferry-Dumazet H."/>
            <person name="Groppi A."/>
            <person name="Hantraye F."/>
            <person name="Hennequin C."/>
            <person name="Jauniaux N."/>
            <person name="Joyet P."/>
            <person name="Kachouri R."/>
            <person name="Kerrest A."/>
            <person name="Koszul R."/>
            <person name="Lemaire M."/>
            <person name="Lesur I."/>
            <person name="Ma L."/>
            <person name="Muller H."/>
            <person name="Nicaud J.-M."/>
            <person name="Nikolski M."/>
            <person name="Oztas S."/>
            <person name="Ozier-Kalogeropoulos O."/>
            <person name="Pellenz S."/>
            <person name="Potier S."/>
            <person name="Richard G.-F."/>
            <person name="Straub M.-L."/>
            <person name="Suleau A."/>
            <person name="Swennen D."/>
            <person name="Tekaia F."/>
            <person name="Wesolowski-Louvel M."/>
            <person name="Westhof E."/>
            <person name="Wirth B."/>
            <person name="Zeniou-Meyer M."/>
            <person name="Zivanovic Y."/>
            <person name="Bolotin-Fukuhara M."/>
            <person name="Thierry A."/>
            <person name="Bouchier C."/>
            <person name="Caudron B."/>
            <person name="Scarpelli C."/>
            <person name="Gaillardin C."/>
            <person name="Weissenbach J."/>
            <person name="Wincker P."/>
            <person name="Souciet J.-L."/>
        </authorList>
    </citation>
    <scope>NUCLEOTIDE SEQUENCE [LARGE SCALE GENOMIC DNA]</scope>
    <source>
        <strain>ATCC 2001 / BCRC 20586 / JCM 3761 / NBRC 0622 / NRRL Y-65 / CBS 138</strain>
    </source>
</reference>